<organism>
    <name type="scientific">Candida albicans (strain SC5314 / ATCC MYA-2876)</name>
    <name type="common">Yeast</name>
    <dbReference type="NCBI Taxonomy" id="237561"/>
    <lineage>
        <taxon>Eukaryota</taxon>
        <taxon>Fungi</taxon>
        <taxon>Dikarya</taxon>
        <taxon>Ascomycota</taxon>
        <taxon>Saccharomycotina</taxon>
        <taxon>Pichiomycetes</taxon>
        <taxon>Debaryomycetaceae</taxon>
        <taxon>Candida/Lodderomyces clade</taxon>
        <taxon>Candida</taxon>
    </lineage>
</organism>
<evidence type="ECO:0000250" key="1"/>
<evidence type="ECO:0000255" key="2">
    <source>
        <dbReference type="PROSITE-ProRule" id="PRU00159"/>
    </source>
</evidence>
<evidence type="ECO:0000255" key="3">
    <source>
        <dbReference type="PROSITE-ProRule" id="PRU10027"/>
    </source>
</evidence>
<evidence type="ECO:0000256" key="4">
    <source>
        <dbReference type="SAM" id="MobiDB-lite"/>
    </source>
</evidence>
<evidence type="ECO:0000305" key="5"/>
<comment type="function">
    <text evidence="1">Component of the SRB8-11 complex. The SRB8-11 complex is a regulatory module of the Mediator complex which is itself involved in regulation of basal and activated RNA polymerase II-dependent transcription. The SRB8-11 complex may be involved in the transcriptional repression of a subset of genes regulated by Mediator. It may inhibit the association of the Mediator complex with RNA polymerase II to form the holoenzyme complex. The SRB8-11 complex phosphorylates the C-terminal domain (CTD) of the largest subunit of RNA polymerase II (By similarity).</text>
</comment>
<comment type="catalytic activity">
    <reaction>
        <text>L-seryl-[protein] + ATP = O-phospho-L-seryl-[protein] + ADP + H(+)</text>
        <dbReference type="Rhea" id="RHEA:17989"/>
        <dbReference type="Rhea" id="RHEA-COMP:9863"/>
        <dbReference type="Rhea" id="RHEA-COMP:11604"/>
        <dbReference type="ChEBI" id="CHEBI:15378"/>
        <dbReference type="ChEBI" id="CHEBI:29999"/>
        <dbReference type="ChEBI" id="CHEBI:30616"/>
        <dbReference type="ChEBI" id="CHEBI:83421"/>
        <dbReference type="ChEBI" id="CHEBI:456216"/>
        <dbReference type="EC" id="2.7.11.22"/>
    </reaction>
</comment>
<comment type="catalytic activity">
    <reaction>
        <text>L-threonyl-[protein] + ATP = O-phospho-L-threonyl-[protein] + ADP + H(+)</text>
        <dbReference type="Rhea" id="RHEA:46608"/>
        <dbReference type="Rhea" id="RHEA-COMP:11060"/>
        <dbReference type="Rhea" id="RHEA-COMP:11605"/>
        <dbReference type="ChEBI" id="CHEBI:15378"/>
        <dbReference type="ChEBI" id="CHEBI:30013"/>
        <dbReference type="ChEBI" id="CHEBI:30616"/>
        <dbReference type="ChEBI" id="CHEBI:61977"/>
        <dbReference type="ChEBI" id="CHEBI:456216"/>
        <dbReference type="EC" id="2.7.11.22"/>
    </reaction>
</comment>
<comment type="catalytic activity">
    <reaction>
        <text>[DNA-directed RNA polymerase] + ATP = phospho-[DNA-directed RNA polymerase] + ADP + H(+)</text>
        <dbReference type="Rhea" id="RHEA:10216"/>
        <dbReference type="Rhea" id="RHEA-COMP:11321"/>
        <dbReference type="Rhea" id="RHEA-COMP:11322"/>
        <dbReference type="ChEBI" id="CHEBI:15378"/>
        <dbReference type="ChEBI" id="CHEBI:30616"/>
        <dbReference type="ChEBI" id="CHEBI:43176"/>
        <dbReference type="ChEBI" id="CHEBI:68546"/>
        <dbReference type="ChEBI" id="CHEBI:456216"/>
        <dbReference type="EC" id="2.7.11.23"/>
    </reaction>
</comment>
<comment type="cofactor">
    <cofactor evidence="1">
        <name>Mg(2+)</name>
        <dbReference type="ChEBI" id="CHEBI:18420"/>
    </cofactor>
</comment>
<comment type="subunit">
    <text evidence="1">Component of the SRB8-11 complex, a regulatory module of the Mediator complex.</text>
</comment>
<comment type="subcellular location">
    <subcellularLocation>
        <location evidence="5">Nucleus</location>
    </subcellularLocation>
</comment>
<comment type="similarity">
    <text evidence="5">Belongs to the protein kinase superfamily. CMGC Ser/Thr protein kinase family. CDC2/CDKX subfamily.</text>
</comment>
<gene>
    <name type="primary">SSN3</name>
    <name type="synonym">CDK8</name>
    <name type="ordered locus">CAALFM_C204260WA</name>
    <name type="ORF">CaO19.794</name>
    <name type="ORF">CaO19.8413</name>
</gene>
<keyword id="KW-0010">Activator</keyword>
<keyword id="KW-0067">ATP-binding</keyword>
<keyword id="KW-0418">Kinase</keyword>
<keyword id="KW-0460">Magnesium</keyword>
<keyword id="KW-0479">Metal-binding</keyword>
<keyword id="KW-0547">Nucleotide-binding</keyword>
<keyword id="KW-0539">Nucleus</keyword>
<keyword id="KW-1185">Reference proteome</keyword>
<keyword id="KW-0678">Repressor</keyword>
<keyword id="KW-0723">Serine/threonine-protein kinase</keyword>
<keyword id="KW-0804">Transcription</keyword>
<keyword id="KW-0805">Transcription regulation</keyword>
<keyword id="KW-0808">Transferase</keyword>
<feature type="chain" id="PRO_0000312938" description="Serine/threonine-protein kinase SSN3">
    <location>
        <begin position="1"/>
        <end position="608"/>
    </location>
</feature>
<feature type="domain" description="Protein kinase" evidence="2">
    <location>
        <begin position="104"/>
        <end position="492"/>
    </location>
</feature>
<feature type="region of interest" description="Disordered" evidence="4">
    <location>
        <begin position="1"/>
        <end position="72"/>
    </location>
</feature>
<feature type="region of interest" description="Disordered" evidence="4">
    <location>
        <begin position="523"/>
        <end position="608"/>
    </location>
</feature>
<feature type="compositionally biased region" description="Low complexity" evidence="4">
    <location>
        <begin position="17"/>
        <end position="47"/>
    </location>
</feature>
<feature type="compositionally biased region" description="Basic residues" evidence="4">
    <location>
        <begin position="49"/>
        <end position="59"/>
    </location>
</feature>
<feature type="compositionally biased region" description="Low complexity" evidence="4">
    <location>
        <begin position="528"/>
        <end position="583"/>
    </location>
</feature>
<feature type="active site" description="Proton acceptor" evidence="2 3">
    <location>
        <position position="307"/>
    </location>
</feature>
<feature type="binding site" evidence="2">
    <location>
        <begin position="110"/>
        <end position="118"/>
    </location>
    <ligand>
        <name>ATP</name>
        <dbReference type="ChEBI" id="CHEBI:30616"/>
    </ligand>
</feature>
<feature type="binding site" evidence="2">
    <location>
        <position position="182"/>
    </location>
    <ligand>
        <name>ATP</name>
        <dbReference type="ChEBI" id="CHEBI:30616"/>
    </ligand>
</feature>
<dbReference type="EC" id="2.7.11.22"/>
<dbReference type="EC" id="2.7.11.23"/>
<dbReference type="EMBL" id="CP017624">
    <property type="protein sequence ID" value="AOW27452.1"/>
    <property type="molecule type" value="Genomic_DNA"/>
</dbReference>
<dbReference type="RefSeq" id="XP_720918.2">
    <property type="nucleotide sequence ID" value="XM_715825.2"/>
</dbReference>
<dbReference type="SMR" id="Q5AHK2"/>
<dbReference type="BioGRID" id="1220401">
    <property type="interactions" value="3"/>
</dbReference>
<dbReference type="FunCoup" id="Q5AHK2">
    <property type="interactions" value="1135"/>
</dbReference>
<dbReference type="STRING" id="237561.Q5AHK2"/>
<dbReference type="EnsemblFungi" id="C2_04260W_A-T">
    <property type="protein sequence ID" value="C2_04260W_A-T-p1"/>
    <property type="gene ID" value="C2_04260W_A"/>
</dbReference>
<dbReference type="GeneID" id="3637353"/>
<dbReference type="KEGG" id="cal:CAALFM_C204260WA"/>
<dbReference type="CGD" id="CAL0000183529">
    <property type="gene designation" value="SSN3"/>
</dbReference>
<dbReference type="VEuPathDB" id="FungiDB:C2_04260W_A"/>
<dbReference type="eggNOG" id="KOG0666">
    <property type="taxonomic scope" value="Eukaryota"/>
</dbReference>
<dbReference type="HOGENOM" id="CLU_000288_181_6_1"/>
<dbReference type="InParanoid" id="Q5AHK2"/>
<dbReference type="OrthoDB" id="6284126at2759"/>
<dbReference type="PRO" id="PR:Q5AHK2"/>
<dbReference type="Proteomes" id="UP000000559">
    <property type="component" value="Chromosome 2"/>
</dbReference>
<dbReference type="GO" id="GO:1990508">
    <property type="term" value="C:CKM complex"/>
    <property type="evidence" value="ECO:0007669"/>
    <property type="project" value="EnsemblFungi"/>
</dbReference>
<dbReference type="GO" id="GO:0016592">
    <property type="term" value="C:mediator complex"/>
    <property type="evidence" value="ECO:0000318"/>
    <property type="project" value="GO_Central"/>
</dbReference>
<dbReference type="GO" id="GO:0005634">
    <property type="term" value="C:nucleus"/>
    <property type="evidence" value="ECO:0000318"/>
    <property type="project" value="GO_Central"/>
</dbReference>
<dbReference type="GO" id="GO:0005524">
    <property type="term" value="F:ATP binding"/>
    <property type="evidence" value="ECO:0007669"/>
    <property type="project" value="UniProtKB-KW"/>
</dbReference>
<dbReference type="GO" id="GO:0004693">
    <property type="term" value="F:cyclin-dependent protein serine/threonine kinase activity"/>
    <property type="evidence" value="ECO:0000318"/>
    <property type="project" value="GO_Central"/>
</dbReference>
<dbReference type="GO" id="GO:0046872">
    <property type="term" value="F:metal ion binding"/>
    <property type="evidence" value="ECO:0007669"/>
    <property type="project" value="UniProtKB-KW"/>
</dbReference>
<dbReference type="GO" id="GO:0106310">
    <property type="term" value="F:protein serine kinase activity"/>
    <property type="evidence" value="ECO:0007669"/>
    <property type="project" value="RHEA"/>
</dbReference>
<dbReference type="GO" id="GO:0004674">
    <property type="term" value="F:protein serine/threonine kinase activity"/>
    <property type="evidence" value="ECO:0000315"/>
    <property type="project" value="CGD"/>
</dbReference>
<dbReference type="GO" id="GO:0008353">
    <property type="term" value="F:RNA polymerase II CTD heptapeptide repeat kinase activity"/>
    <property type="evidence" value="ECO:0007669"/>
    <property type="project" value="UniProtKB-EC"/>
</dbReference>
<dbReference type="GO" id="GO:0071244">
    <property type="term" value="P:cellular response to carbon dioxide"/>
    <property type="evidence" value="ECO:0000315"/>
    <property type="project" value="CGD"/>
</dbReference>
<dbReference type="GO" id="GO:0060258">
    <property type="term" value="P:negative regulation of filamentous growth"/>
    <property type="evidence" value="ECO:0000315"/>
    <property type="project" value="CGD"/>
</dbReference>
<dbReference type="GO" id="GO:0000122">
    <property type="term" value="P:negative regulation of transcription by RNA polymerase II"/>
    <property type="evidence" value="ECO:0000315"/>
    <property type="project" value="CGD"/>
</dbReference>
<dbReference type="GO" id="GO:0070481">
    <property type="term" value="P:nuclear-transcribed mRNA catabolic process, non-stop decay"/>
    <property type="evidence" value="ECO:0007669"/>
    <property type="project" value="EnsemblFungi"/>
</dbReference>
<dbReference type="GO" id="GO:0045944">
    <property type="term" value="P:positive regulation of transcription by RNA polymerase II"/>
    <property type="evidence" value="ECO:0007669"/>
    <property type="project" value="EnsemblFungi"/>
</dbReference>
<dbReference type="GO" id="GO:0031648">
    <property type="term" value="P:protein destabilization"/>
    <property type="evidence" value="ECO:0007669"/>
    <property type="project" value="EnsemblFungi"/>
</dbReference>
<dbReference type="GO" id="GO:0075139">
    <property type="term" value="P:response to host iron concentration"/>
    <property type="evidence" value="ECO:0000315"/>
    <property type="project" value="CGD"/>
</dbReference>
<dbReference type="FunFam" id="1.10.510.10:FF:000408">
    <property type="entry name" value="Serine/threonine-protein kinase SSN3"/>
    <property type="match status" value="1"/>
</dbReference>
<dbReference type="Gene3D" id="3.30.200.20">
    <property type="entry name" value="Phosphorylase Kinase, domain 1"/>
    <property type="match status" value="1"/>
</dbReference>
<dbReference type="Gene3D" id="1.10.510.10">
    <property type="entry name" value="Transferase(Phosphotransferase) domain 1"/>
    <property type="match status" value="1"/>
</dbReference>
<dbReference type="InterPro" id="IPR050108">
    <property type="entry name" value="CDK"/>
</dbReference>
<dbReference type="InterPro" id="IPR011009">
    <property type="entry name" value="Kinase-like_dom_sf"/>
</dbReference>
<dbReference type="InterPro" id="IPR000719">
    <property type="entry name" value="Prot_kinase_dom"/>
</dbReference>
<dbReference type="InterPro" id="IPR008271">
    <property type="entry name" value="Ser/Thr_kinase_AS"/>
</dbReference>
<dbReference type="PANTHER" id="PTHR24056">
    <property type="entry name" value="CELL DIVISION PROTEIN KINASE"/>
    <property type="match status" value="1"/>
</dbReference>
<dbReference type="PANTHER" id="PTHR24056:SF495">
    <property type="entry name" value="CYCLIN-DEPENDENT KINASE 8-RELATED"/>
    <property type="match status" value="1"/>
</dbReference>
<dbReference type="Pfam" id="PF00069">
    <property type="entry name" value="Pkinase"/>
    <property type="match status" value="1"/>
</dbReference>
<dbReference type="SMART" id="SM00220">
    <property type="entry name" value="S_TKc"/>
    <property type="match status" value="1"/>
</dbReference>
<dbReference type="SUPFAM" id="SSF56112">
    <property type="entry name" value="Protein kinase-like (PK-like)"/>
    <property type="match status" value="1"/>
</dbReference>
<dbReference type="PROSITE" id="PS50011">
    <property type="entry name" value="PROTEIN_KINASE_DOM"/>
    <property type="match status" value="1"/>
</dbReference>
<dbReference type="PROSITE" id="PS00108">
    <property type="entry name" value="PROTEIN_KINASE_ST"/>
    <property type="match status" value="1"/>
</dbReference>
<sequence length="608" mass="68962">MSYSSASFRKLNNVGISQPSQTTTTTTSANQPQSQSQQQPLQQSQQQHLHMKPNPHIPHHQLPGTVGTRTSIPQPALMASNSILTLGPFKHRKDLTRESVLSTYQIMGYIAAGTYGKVYKAKLKSNKLNKTDDDSGIDGINNKDIFSESMNDLHHDNSSSIMINTTTNITINNSLPQFFAIKKFKSDNHHHHINNNNNGGNHLSKGNNSIHQDEVLHYTGISQSAIREMSLCRELNNKNITKLVDIILENKSIYMVFEFCEHDLLQIIHYQSHPDFKPIPCPTIKSLIWQILNGVTFLHKNWILHRDLKPANIMVSSQGVVKIGDLGLARKFKSPLQSLYTGDKVVVTIWYRAPELLLGTRHYTPAVDLWAVGCILAELLSLRPIFKGEEAKIDLNNKKSVPFQKNQLQKIIEILGTPTTDIWNNLNKYPEYLSFTQHFNQNYPNNLSNWFKLINGGNNQNSEKCLELLSGLLKYDPELRLTADQALLHPYFLELPKVNENAFEGLNYKYPNRKIYTDDNDIMTTAANNNNNNNNNNNNNNNNNNNNNNNNNNNSGHQLSQQQNVQIQQVHQMQQQIHSQQLQSHGANSTYKRSGIDDLPGGIRKKRG</sequence>
<name>SSN3_CANAL</name>
<accession>Q5AHK2</accession>
<accession>A0A1D8PH23</accession>
<protein>
    <recommendedName>
        <fullName>Serine/threonine-protein kinase SSN3</fullName>
        <ecNumber>2.7.11.22</ecNumber>
        <ecNumber>2.7.11.23</ecNumber>
    </recommendedName>
    <alternativeName>
        <fullName>Cyclin-dependent kinase 8</fullName>
    </alternativeName>
</protein>
<proteinExistence type="inferred from homology"/>
<reference key="1">
    <citation type="journal article" date="2004" name="Proc. Natl. Acad. Sci. U.S.A.">
        <title>The diploid genome sequence of Candida albicans.</title>
        <authorList>
            <person name="Jones T."/>
            <person name="Federspiel N.A."/>
            <person name="Chibana H."/>
            <person name="Dungan J."/>
            <person name="Kalman S."/>
            <person name="Magee B.B."/>
            <person name="Newport G."/>
            <person name="Thorstenson Y.R."/>
            <person name="Agabian N."/>
            <person name="Magee P.T."/>
            <person name="Davis R.W."/>
            <person name="Scherer S."/>
        </authorList>
    </citation>
    <scope>NUCLEOTIDE SEQUENCE [LARGE SCALE GENOMIC DNA]</scope>
    <source>
        <strain>SC5314 / ATCC MYA-2876</strain>
    </source>
</reference>
<reference key="2">
    <citation type="journal article" date="2007" name="Genome Biol.">
        <title>Assembly of the Candida albicans genome into sixteen supercontigs aligned on the eight chromosomes.</title>
        <authorList>
            <person name="van het Hoog M."/>
            <person name="Rast T.J."/>
            <person name="Martchenko M."/>
            <person name="Grindle S."/>
            <person name="Dignard D."/>
            <person name="Hogues H."/>
            <person name="Cuomo C."/>
            <person name="Berriman M."/>
            <person name="Scherer S."/>
            <person name="Magee B.B."/>
            <person name="Whiteway M."/>
            <person name="Chibana H."/>
            <person name="Nantel A."/>
            <person name="Magee P.T."/>
        </authorList>
    </citation>
    <scope>GENOME REANNOTATION</scope>
    <source>
        <strain>SC5314 / ATCC MYA-2876</strain>
    </source>
</reference>
<reference key="3">
    <citation type="journal article" date="2013" name="Genome Biol.">
        <title>Assembly of a phased diploid Candida albicans genome facilitates allele-specific measurements and provides a simple model for repeat and indel structure.</title>
        <authorList>
            <person name="Muzzey D."/>
            <person name="Schwartz K."/>
            <person name="Weissman J.S."/>
            <person name="Sherlock G."/>
        </authorList>
    </citation>
    <scope>NUCLEOTIDE SEQUENCE [LARGE SCALE GENOMIC DNA]</scope>
    <scope>GENOME REANNOTATION</scope>
    <source>
        <strain>SC5314 / ATCC MYA-2876</strain>
    </source>
</reference>